<evidence type="ECO:0000255" key="1">
    <source>
        <dbReference type="HAMAP-Rule" id="MF_00605"/>
    </source>
</evidence>
<comment type="function">
    <text evidence="1">Specifically methylates guanosine-37 in various tRNAs.</text>
</comment>
<comment type="catalytic activity">
    <reaction evidence="1">
        <text>guanosine(37) in tRNA + S-adenosyl-L-methionine = N(1)-methylguanosine(37) in tRNA + S-adenosyl-L-homocysteine + H(+)</text>
        <dbReference type="Rhea" id="RHEA:36899"/>
        <dbReference type="Rhea" id="RHEA-COMP:10145"/>
        <dbReference type="Rhea" id="RHEA-COMP:10147"/>
        <dbReference type="ChEBI" id="CHEBI:15378"/>
        <dbReference type="ChEBI" id="CHEBI:57856"/>
        <dbReference type="ChEBI" id="CHEBI:59789"/>
        <dbReference type="ChEBI" id="CHEBI:73542"/>
        <dbReference type="ChEBI" id="CHEBI:74269"/>
        <dbReference type="EC" id="2.1.1.228"/>
    </reaction>
</comment>
<comment type="subunit">
    <text evidence="1">Homodimer.</text>
</comment>
<comment type="subcellular location">
    <subcellularLocation>
        <location evidence="1">Cytoplasm</location>
    </subcellularLocation>
</comment>
<comment type="similarity">
    <text evidence="1">Belongs to the RNA methyltransferase TrmD family.</text>
</comment>
<protein>
    <recommendedName>
        <fullName evidence="1">tRNA (guanine-N(1)-)-methyltransferase</fullName>
        <ecNumber evidence="1">2.1.1.228</ecNumber>
    </recommendedName>
    <alternativeName>
        <fullName evidence="1">M1G-methyltransferase</fullName>
    </alternativeName>
    <alternativeName>
        <fullName evidence="1">tRNA [GM37] methyltransferase</fullName>
    </alternativeName>
</protein>
<accession>B0REN1</accession>
<feature type="chain" id="PRO_1000082510" description="tRNA (guanine-N(1)-)-methyltransferase">
    <location>
        <begin position="1"/>
        <end position="228"/>
    </location>
</feature>
<feature type="binding site" evidence="1">
    <location>
        <position position="111"/>
    </location>
    <ligand>
        <name>S-adenosyl-L-methionine</name>
        <dbReference type="ChEBI" id="CHEBI:59789"/>
    </ligand>
</feature>
<feature type="binding site" evidence="1">
    <location>
        <begin position="135"/>
        <end position="140"/>
    </location>
    <ligand>
        <name>S-adenosyl-L-methionine</name>
        <dbReference type="ChEBI" id="CHEBI:59789"/>
    </ligand>
</feature>
<name>TRMD_CLASE</name>
<keyword id="KW-0963">Cytoplasm</keyword>
<keyword id="KW-0489">Methyltransferase</keyword>
<keyword id="KW-0949">S-adenosyl-L-methionine</keyword>
<keyword id="KW-0808">Transferase</keyword>
<keyword id="KW-0819">tRNA processing</keyword>
<gene>
    <name evidence="1" type="primary">trmD</name>
    <name type="ordered locus">CMS0758</name>
</gene>
<organism>
    <name type="scientific">Clavibacter sepedonicus</name>
    <name type="common">Clavibacter michiganensis subsp. sepedonicus</name>
    <dbReference type="NCBI Taxonomy" id="31964"/>
    <lineage>
        <taxon>Bacteria</taxon>
        <taxon>Bacillati</taxon>
        <taxon>Actinomycetota</taxon>
        <taxon>Actinomycetes</taxon>
        <taxon>Micrococcales</taxon>
        <taxon>Microbacteriaceae</taxon>
        <taxon>Clavibacter</taxon>
    </lineage>
</organism>
<reference key="1">
    <citation type="journal article" date="2008" name="J. Bacteriol.">
        <title>Genome of the actinomycete plant pathogen Clavibacter michiganensis subsp. sepedonicus suggests recent niche adaptation.</title>
        <authorList>
            <person name="Bentley S.D."/>
            <person name="Corton C."/>
            <person name="Brown S.E."/>
            <person name="Barron A."/>
            <person name="Clark L."/>
            <person name="Doggett J."/>
            <person name="Harris B."/>
            <person name="Ormond D."/>
            <person name="Quail M.A."/>
            <person name="May G."/>
            <person name="Francis D."/>
            <person name="Knudson D."/>
            <person name="Parkhill J."/>
            <person name="Ishimaru C.A."/>
        </authorList>
    </citation>
    <scope>NUCLEOTIDE SEQUENCE [LARGE SCALE GENOMIC DNA]</scope>
    <source>
        <strain>ATCC 33113 / DSM 20744 / JCM 9667 / LMG 2889 / ICMP 2535 / C-1</strain>
    </source>
</reference>
<sequence>MRIDIVSIFPEFFGVLDISLLGRARQSGLIDLRLHDLRAFTHDRHRTVDDTPYGGGAGMVMRPEPWGEAMDEVLADDTDPVVIFPSPAGEVFTQAMAQELSAEPHLAFGCGRYEGIDQRVVDHTATRARVRLVSLGDYVLNGGEVAVMAMIEAIGRLVPGVVGNPASLVEESHSDGLLEHPSYTKPPEWRGLAVPDVLRSGNHGAIAAWRREQQLERTRRVRPDLLPD</sequence>
<dbReference type="EC" id="2.1.1.228" evidence="1"/>
<dbReference type="EMBL" id="AM849034">
    <property type="protein sequence ID" value="CAQ00878.1"/>
    <property type="molecule type" value="Genomic_DNA"/>
</dbReference>
<dbReference type="RefSeq" id="WP_012298186.1">
    <property type="nucleotide sequence ID" value="NZ_MZMN01000003.1"/>
</dbReference>
<dbReference type="SMR" id="B0REN1"/>
<dbReference type="STRING" id="31964.CMS0758"/>
<dbReference type="KEGG" id="cms:CMS0758"/>
<dbReference type="eggNOG" id="COG0336">
    <property type="taxonomic scope" value="Bacteria"/>
</dbReference>
<dbReference type="HOGENOM" id="CLU_047363_0_0_11"/>
<dbReference type="OrthoDB" id="9807416at2"/>
<dbReference type="Proteomes" id="UP000001318">
    <property type="component" value="Chromosome"/>
</dbReference>
<dbReference type="GO" id="GO:0005829">
    <property type="term" value="C:cytosol"/>
    <property type="evidence" value="ECO:0007669"/>
    <property type="project" value="TreeGrafter"/>
</dbReference>
<dbReference type="GO" id="GO:0052906">
    <property type="term" value="F:tRNA (guanine(37)-N1)-methyltransferase activity"/>
    <property type="evidence" value="ECO:0007669"/>
    <property type="project" value="UniProtKB-UniRule"/>
</dbReference>
<dbReference type="GO" id="GO:0002939">
    <property type="term" value="P:tRNA N1-guanine methylation"/>
    <property type="evidence" value="ECO:0007669"/>
    <property type="project" value="TreeGrafter"/>
</dbReference>
<dbReference type="CDD" id="cd18080">
    <property type="entry name" value="TrmD-like"/>
    <property type="match status" value="1"/>
</dbReference>
<dbReference type="FunFam" id="3.40.1280.10:FF:000001">
    <property type="entry name" value="tRNA (guanine-N(1)-)-methyltransferase"/>
    <property type="match status" value="1"/>
</dbReference>
<dbReference type="Gene3D" id="3.40.1280.10">
    <property type="match status" value="1"/>
</dbReference>
<dbReference type="Gene3D" id="1.10.1270.20">
    <property type="entry name" value="tRNA(m1g37)methyltransferase, domain 2"/>
    <property type="match status" value="1"/>
</dbReference>
<dbReference type="HAMAP" id="MF_00605">
    <property type="entry name" value="TrmD"/>
    <property type="match status" value="1"/>
</dbReference>
<dbReference type="InterPro" id="IPR029028">
    <property type="entry name" value="Alpha/beta_knot_MTases"/>
</dbReference>
<dbReference type="InterPro" id="IPR023148">
    <property type="entry name" value="tRNA_m1G_MeTrfase_C_sf"/>
</dbReference>
<dbReference type="InterPro" id="IPR002649">
    <property type="entry name" value="tRNA_m1G_MeTrfase_TrmD"/>
</dbReference>
<dbReference type="InterPro" id="IPR029026">
    <property type="entry name" value="tRNA_m1G_MTases_N"/>
</dbReference>
<dbReference type="InterPro" id="IPR016009">
    <property type="entry name" value="tRNA_MeTrfase_TRMD/TRM10"/>
</dbReference>
<dbReference type="NCBIfam" id="NF000648">
    <property type="entry name" value="PRK00026.1"/>
    <property type="match status" value="1"/>
</dbReference>
<dbReference type="NCBIfam" id="TIGR00088">
    <property type="entry name" value="trmD"/>
    <property type="match status" value="1"/>
</dbReference>
<dbReference type="PANTHER" id="PTHR46417">
    <property type="entry name" value="TRNA (GUANINE-N(1)-)-METHYLTRANSFERASE"/>
    <property type="match status" value="1"/>
</dbReference>
<dbReference type="PANTHER" id="PTHR46417:SF1">
    <property type="entry name" value="TRNA (GUANINE-N(1)-)-METHYLTRANSFERASE"/>
    <property type="match status" value="1"/>
</dbReference>
<dbReference type="Pfam" id="PF01746">
    <property type="entry name" value="tRNA_m1G_MT"/>
    <property type="match status" value="1"/>
</dbReference>
<dbReference type="PIRSF" id="PIRSF000386">
    <property type="entry name" value="tRNA_mtase"/>
    <property type="match status" value="1"/>
</dbReference>
<dbReference type="SUPFAM" id="SSF75217">
    <property type="entry name" value="alpha/beta knot"/>
    <property type="match status" value="1"/>
</dbReference>
<proteinExistence type="inferred from homology"/>